<proteinExistence type="inferred from homology"/>
<reference key="1">
    <citation type="submission" date="2007-03" db="EMBL/GenBank/DDBJ databases">
        <title>Complete sequence of Desulfotomaculum reducens MI-1.</title>
        <authorList>
            <consortium name="US DOE Joint Genome Institute"/>
            <person name="Copeland A."/>
            <person name="Lucas S."/>
            <person name="Lapidus A."/>
            <person name="Barry K."/>
            <person name="Detter J.C."/>
            <person name="Glavina del Rio T."/>
            <person name="Hammon N."/>
            <person name="Israni S."/>
            <person name="Dalin E."/>
            <person name="Tice H."/>
            <person name="Pitluck S."/>
            <person name="Sims D."/>
            <person name="Brettin T."/>
            <person name="Bruce D."/>
            <person name="Han C."/>
            <person name="Tapia R."/>
            <person name="Schmutz J."/>
            <person name="Larimer F."/>
            <person name="Land M."/>
            <person name="Hauser L."/>
            <person name="Kyrpides N."/>
            <person name="Kim E."/>
            <person name="Tebo B.M."/>
            <person name="Richardson P."/>
        </authorList>
    </citation>
    <scope>NUCLEOTIDE SEQUENCE [LARGE SCALE GENOMIC DNA]</scope>
    <source>
        <strain>ATCC BAA-1160 / DSM 100696 / MI-1</strain>
    </source>
</reference>
<dbReference type="EMBL" id="CP000612">
    <property type="protein sequence ID" value="ABO50265.1"/>
    <property type="molecule type" value="Genomic_DNA"/>
</dbReference>
<dbReference type="RefSeq" id="WP_011878079.1">
    <property type="nucleotide sequence ID" value="NC_009253.1"/>
</dbReference>
<dbReference type="SMR" id="A4J5B2"/>
<dbReference type="STRING" id="349161.Dred_1740"/>
<dbReference type="KEGG" id="drm:Dred_1740"/>
<dbReference type="eggNOG" id="COG2220">
    <property type="taxonomic scope" value="Bacteria"/>
</dbReference>
<dbReference type="HOGENOM" id="CLU_070010_4_1_9"/>
<dbReference type="OrthoDB" id="9789133at2"/>
<dbReference type="Proteomes" id="UP000001556">
    <property type="component" value="Chromosome"/>
</dbReference>
<dbReference type="GO" id="GO:0016787">
    <property type="term" value="F:hydrolase activity"/>
    <property type="evidence" value="ECO:0007669"/>
    <property type="project" value="UniProtKB-UniRule"/>
</dbReference>
<dbReference type="Gene3D" id="3.60.15.10">
    <property type="entry name" value="Ribonuclease Z/Hydroxyacylglutathione hydrolase-like"/>
    <property type="match status" value="1"/>
</dbReference>
<dbReference type="HAMAP" id="MF_00457">
    <property type="entry name" value="UPF0173"/>
    <property type="match status" value="1"/>
</dbReference>
<dbReference type="InterPro" id="IPR001279">
    <property type="entry name" value="Metallo-B-lactamas"/>
</dbReference>
<dbReference type="InterPro" id="IPR036866">
    <property type="entry name" value="RibonucZ/Hydroxyglut_hydro"/>
</dbReference>
<dbReference type="InterPro" id="IPR022877">
    <property type="entry name" value="UPF0173"/>
</dbReference>
<dbReference type="InterPro" id="IPR050114">
    <property type="entry name" value="UPF0173_UPF0282_UlaG_hydrolase"/>
</dbReference>
<dbReference type="NCBIfam" id="NF001911">
    <property type="entry name" value="PRK00685.1"/>
    <property type="match status" value="1"/>
</dbReference>
<dbReference type="PANTHER" id="PTHR43546:SF3">
    <property type="entry name" value="UPF0173 METAL-DEPENDENT HYDROLASE MJ1163"/>
    <property type="match status" value="1"/>
</dbReference>
<dbReference type="PANTHER" id="PTHR43546">
    <property type="entry name" value="UPF0173 METAL-DEPENDENT HYDROLASE MJ1163-RELATED"/>
    <property type="match status" value="1"/>
</dbReference>
<dbReference type="Pfam" id="PF13483">
    <property type="entry name" value="Lactamase_B_3"/>
    <property type="match status" value="1"/>
</dbReference>
<dbReference type="SMART" id="SM00849">
    <property type="entry name" value="Lactamase_B"/>
    <property type="match status" value="1"/>
</dbReference>
<dbReference type="SUPFAM" id="SSF56281">
    <property type="entry name" value="Metallo-hydrolase/oxidoreductase"/>
    <property type="match status" value="1"/>
</dbReference>
<accession>A4J5B2</accession>
<name>Y1740_DESRM</name>
<keyword id="KW-0378">Hydrolase</keyword>
<keyword id="KW-1185">Reference proteome</keyword>
<organism>
    <name type="scientific">Desulforamulus reducens (strain ATCC BAA-1160 / DSM 100696 / MI-1)</name>
    <name type="common">Desulfotomaculum reducens</name>
    <dbReference type="NCBI Taxonomy" id="349161"/>
    <lineage>
        <taxon>Bacteria</taxon>
        <taxon>Bacillati</taxon>
        <taxon>Bacillota</taxon>
        <taxon>Clostridia</taxon>
        <taxon>Eubacteriales</taxon>
        <taxon>Peptococcaceae</taxon>
        <taxon>Desulforamulus</taxon>
    </lineage>
</organism>
<gene>
    <name type="ordered locus">Dred_1740</name>
</gene>
<feature type="chain" id="PRO_1000081124" description="UPF0173 metal-dependent hydrolase Dred_1740">
    <location>
        <begin position="1"/>
        <end position="228"/>
    </location>
</feature>
<protein>
    <recommendedName>
        <fullName evidence="1">UPF0173 metal-dependent hydrolase Dred_1740</fullName>
    </recommendedName>
</protein>
<sequence>MKLTFLGHSAFLLENQEVSLVIDPFLTGNPMAPHDIPVKPNYILVSHGHGDHLGDAIRLAKETSATIVSVFELANYCARQGVLTHPMHIGGSHNFGPMKVKLTQALHGNSTGSDRGPAEYLGNPCGFLIYLGNKTIYHAGDTGLFGDMQLIGDLNSIDVALLPIGDNFTMGPTDALEAVKMLKPQRVIPMHYNTWPLISQDPTAFKKAVEQATTTQVDILQPGEFLKI</sequence>
<evidence type="ECO:0000255" key="1">
    <source>
        <dbReference type="HAMAP-Rule" id="MF_00457"/>
    </source>
</evidence>
<comment type="similarity">
    <text evidence="1">Belongs to the UPF0173 family.</text>
</comment>